<proteinExistence type="evidence at protein level"/>
<accession>O48845</accession>
<accession>Q0WTX9</accession>
<protein>
    <recommendedName>
        <fullName evidence="6">Cytochrome b5 isoform B</fullName>
        <shortName evidence="6">AtCb5-B</shortName>
    </recommendedName>
    <alternativeName>
        <fullName>Cytochrome b5 isoform 2</fullName>
    </alternativeName>
    <alternativeName>
        <fullName evidence="7">Cytochrome b5 isoform E</fullName>
        <shortName evidence="7">AtCb5-E</shortName>
    </alternativeName>
</protein>
<reference key="1">
    <citation type="journal article" date="1999" name="Nature">
        <title>Sequence and analysis of chromosome 2 of the plant Arabidopsis thaliana.</title>
        <authorList>
            <person name="Lin X."/>
            <person name="Kaul S."/>
            <person name="Rounsley S.D."/>
            <person name="Shea T.P."/>
            <person name="Benito M.-I."/>
            <person name="Town C.D."/>
            <person name="Fujii C.Y."/>
            <person name="Mason T.M."/>
            <person name="Bowman C.L."/>
            <person name="Barnstead M.E."/>
            <person name="Feldblyum T.V."/>
            <person name="Buell C.R."/>
            <person name="Ketchum K.A."/>
            <person name="Lee J.J."/>
            <person name="Ronning C.M."/>
            <person name="Koo H.L."/>
            <person name="Moffat K.S."/>
            <person name="Cronin L.A."/>
            <person name="Shen M."/>
            <person name="Pai G."/>
            <person name="Van Aken S."/>
            <person name="Umayam L."/>
            <person name="Tallon L.J."/>
            <person name="Gill J.E."/>
            <person name="Adams M.D."/>
            <person name="Carrera A.J."/>
            <person name="Creasy T.H."/>
            <person name="Goodman H.M."/>
            <person name="Somerville C.R."/>
            <person name="Copenhaver G.P."/>
            <person name="Preuss D."/>
            <person name="Nierman W.C."/>
            <person name="White O."/>
            <person name="Eisen J.A."/>
            <person name="Salzberg S.L."/>
            <person name="Fraser C.M."/>
            <person name="Venter J.C."/>
        </authorList>
    </citation>
    <scope>NUCLEOTIDE SEQUENCE [LARGE SCALE GENOMIC DNA]</scope>
    <source>
        <strain>cv. Columbia</strain>
    </source>
</reference>
<reference key="2">
    <citation type="journal article" date="2017" name="Plant J.">
        <title>Araport11: a complete reannotation of the Arabidopsis thaliana reference genome.</title>
        <authorList>
            <person name="Cheng C.Y."/>
            <person name="Krishnakumar V."/>
            <person name="Chan A.P."/>
            <person name="Thibaud-Nissen F."/>
            <person name="Schobel S."/>
            <person name="Town C.D."/>
        </authorList>
    </citation>
    <scope>GENOME REANNOTATION</scope>
    <source>
        <strain>cv. Columbia</strain>
    </source>
</reference>
<reference key="3">
    <citation type="journal article" date="2003" name="Science">
        <title>Empirical analysis of transcriptional activity in the Arabidopsis genome.</title>
        <authorList>
            <person name="Yamada K."/>
            <person name="Lim J."/>
            <person name="Dale J.M."/>
            <person name="Chen H."/>
            <person name="Shinn P."/>
            <person name="Palm C.J."/>
            <person name="Southwick A.M."/>
            <person name="Wu H.C."/>
            <person name="Kim C.J."/>
            <person name="Nguyen M."/>
            <person name="Pham P.K."/>
            <person name="Cheuk R.F."/>
            <person name="Karlin-Newmann G."/>
            <person name="Liu S.X."/>
            <person name="Lam B."/>
            <person name="Sakano H."/>
            <person name="Wu T."/>
            <person name="Yu G."/>
            <person name="Miranda M."/>
            <person name="Quach H.L."/>
            <person name="Tripp M."/>
            <person name="Chang C.H."/>
            <person name="Lee J.M."/>
            <person name="Toriumi M.J."/>
            <person name="Chan M.M."/>
            <person name="Tang C.C."/>
            <person name="Onodera C.S."/>
            <person name="Deng J.M."/>
            <person name="Akiyama K."/>
            <person name="Ansari Y."/>
            <person name="Arakawa T."/>
            <person name="Banh J."/>
            <person name="Banno F."/>
            <person name="Bowser L."/>
            <person name="Brooks S.Y."/>
            <person name="Carninci P."/>
            <person name="Chao Q."/>
            <person name="Choy N."/>
            <person name="Enju A."/>
            <person name="Goldsmith A.D."/>
            <person name="Gurjal M."/>
            <person name="Hansen N.F."/>
            <person name="Hayashizaki Y."/>
            <person name="Johnson-Hopson C."/>
            <person name="Hsuan V.W."/>
            <person name="Iida K."/>
            <person name="Karnes M."/>
            <person name="Khan S."/>
            <person name="Koesema E."/>
            <person name="Ishida J."/>
            <person name="Jiang P.X."/>
            <person name="Jones T."/>
            <person name="Kawai J."/>
            <person name="Kamiya A."/>
            <person name="Meyers C."/>
            <person name="Nakajima M."/>
            <person name="Narusaka M."/>
            <person name="Seki M."/>
            <person name="Sakurai T."/>
            <person name="Satou M."/>
            <person name="Tamse R."/>
            <person name="Vaysberg M."/>
            <person name="Wallender E.K."/>
            <person name="Wong C."/>
            <person name="Yamamura Y."/>
            <person name="Yuan S."/>
            <person name="Shinozaki K."/>
            <person name="Davis R.W."/>
            <person name="Theologis A."/>
            <person name="Ecker J.R."/>
        </authorList>
    </citation>
    <scope>NUCLEOTIDE SEQUENCE [LARGE SCALE MRNA]</scope>
    <source>
        <strain>cv. Columbia</strain>
    </source>
</reference>
<reference key="4">
    <citation type="submission" date="2006-07" db="EMBL/GenBank/DDBJ databases">
        <title>Large-scale analysis of RIKEN Arabidopsis full-length (RAFL) cDNAs.</title>
        <authorList>
            <person name="Totoki Y."/>
            <person name="Seki M."/>
            <person name="Ishida J."/>
            <person name="Nakajima M."/>
            <person name="Enju A."/>
            <person name="Kamiya A."/>
            <person name="Narusaka M."/>
            <person name="Shin-i T."/>
            <person name="Nakagawa M."/>
            <person name="Sakamoto N."/>
            <person name="Oishi K."/>
            <person name="Kohara Y."/>
            <person name="Kobayashi M."/>
            <person name="Toyoda A."/>
            <person name="Sakaki Y."/>
            <person name="Sakurai T."/>
            <person name="Iida K."/>
            <person name="Akiyama K."/>
            <person name="Satou M."/>
            <person name="Toyoda T."/>
            <person name="Konagaya A."/>
            <person name="Carninci P."/>
            <person name="Kawai J."/>
            <person name="Hayashizaki Y."/>
            <person name="Shinozaki K."/>
        </authorList>
    </citation>
    <scope>NUCLEOTIDE SEQUENCE [LARGE SCALE MRNA]</scope>
    <source>
        <strain>cv. Columbia</strain>
    </source>
</reference>
<reference key="5">
    <citation type="journal article" date="2009" name="Plant J.">
        <title>Functional association of cell death suppressor, Arabidopsis Bax inhibitor-1, with fatty acid 2-hydroxylation through cytochrome b(5).</title>
        <authorList>
            <person name="Nagano M."/>
            <person name="Ihara-Ohori Y."/>
            <person name="Imai H."/>
            <person name="Inada N."/>
            <person name="Fujimoto M."/>
            <person name="Tsutsumi N."/>
            <person name="Uchimiya H."/>
            <person name="Kawai-Yamada M."/>
        </authorList>
    </citation>
    <scope>SUBCELLULAR LOCATION</scope>
    <scope>INTERACTION WITH BI-1; FAH1 AND FAH2</scope>
    <scope>NOMENCLATURE</scope>
</reference>
<reference key="6">
    <citation type="journal article" date="2012" name="Plant Cell">
        <title>Reconstitution of plant alkane biosynthesis in yeast demonstrates that Arabidopsis ECERIFERUM1 and ECERIFERUM3 are core components of a very-long-chain alkane synthesis complex.</title>
        <authorList>
            <person name="Bernard A."/>
            <person name="Domergue F."/>
            <person name="Pascal S."/>
            <person name="Jetter R."/>
            <person name="Renne C."/>
            <person name="Faure J.D."/>
            <person name="Haslam R.P."/>
            <person name="Napier J.A."/>
            <person name="Lessire R."/>
            <person name="Joubes J."/>
        </authorList>
    </citation>
    <scope>INTERACTION WITH CER1</scope>
    <scope>SUBCELLULAR LOCATION</scope>
    <source>
        <strain>cv. Columbia</strain>
    </source>
</reference>
<reference key="7">
    <citation type="journal article" date="2012" name="PLoS ONE">
        <title>Higher plant cytochrome b5 polypeptides modulate fatty acid desaturation.</title>
        <authorList>
            <person name="Kumar R."/>
            <person name="Tran L.S."/>
            <person name="Neelakandan A.K."/>
            <person name="Nguyen H.T."/>
        </authorList>
    </citation>
    <scope>FUNCTION</scope>
    <scope>NOMENCLATURE</scope>
</reference>
<organism>
    <name type="scientific">Arabidopsis thaliana</name>
    <name type="common">Mouse-ear cress</name>
    <dbReference type="NCBI Taxonomy" id="3702"/>
    <lineage>
        <taxon>Eukaryota</taxon>
        <taxon>Viridiplantae</taxon>
        <taxon>Streptophyta</taxon>
        <taxon>Embryophyta</taxon>
        <taxon>Tracheophyta</taxon>
        <taxon>Spermatophyta</taxon>
        <taxon>Magnoliopsida</taxon>
        <taxon>eudicotyledons</taxon>
        <taxon>Gunneridae</taxon>
        <taxon>Pentapetalae</taxon>
        <taxon>rosids</taxon>
        <taxon>malvids</taxon>
        <taxon>Brassicales</taxon>
        <taxon>Brassicaceae</taxon>
        <taxon>Camelineae</taxon>
        <taxon>Arabidopsis</taxon>
    </lineage>
</organism>
<feature type="chain" id="PRO_0000166021" description="Cytochrome b5 isoform B">
    <location>
        <begin position="1"/>
        <end position="134"/>
    </location>
</feature>
<feature type="transmembrane region" description="Helical" evidence="1">
    <location>
        <begin position="107"/>
        <end position="127"/>
    </location>
</feature>
<feature type="domain" description="Cytochrome b5 heme-binding" evidence="2">
    <location>
        <begin position="5"/>
        <end position="81"/>
    </location>
</feature>
<feature type="binding site" description="axial binding residue" evidence="2">
    <location>
        <position position="40"/>
    </location>
    <ligand>
        <name>heme</name>
        <dbReference type="ChEBI" id="CHEBI:30413"/>
    </ligand>
    <ligandPart>
        <name>Fe</name>
        <dbReference type="ChEBI" id="CHEBI:18248"/>
    </ligandPart>
</feature>
<feature type="binding site" description="axial binding residue" evidence="2">
    <location>
        <position position="64"/>
    </location>
    <ligand>
        <name>heme</name>
        <dbReference type="ChEBI" id="CHEBI:30413"/>
    </ligand>
    <ligandPart>
        <name>Fe</name>
        <dbReference type="ChEBI" id="CHEBI:18248"/>
    </ligandPart>
</feature>
<evidence type="ECO:0000255" key="1"/>
<evidence type="ECO:0000255" key="2">
    <source>
        <dbReference type="PROSITE-ProRule" id="PRU00279"/>
    </source>
</evidence>
<evidence type="ECO:0000269" key="3">
    <source>
    </source>
</evidence>
<evidence type="ECO:0000269" key="4">
    <source>
    </source>
</evidence>
<evidence type="ECO:0000269" key="5">
    <source>
    </source>
</evidence>
<evidence type="ECO:0000303" key="6">
    <source>
    </source>
</evidence>
<evidence type="ECO:0000303" key="7">
    <source>
    </source>
</evidence>
<evidence type="ECO:0000305" key="8"/>
<gene>
    <name evidence="8" type="primary">CYTB5-B</name>
    <name evidence="6" type="synonym">CB5-B</name>
    <name evidence="7" type="synonym">CB5-E</name>
    <name type="ordered locus">At2g32720</name>
    <name type="ORF">F24L7.14</name>
</gene>
<dbReference type="EMBL" id="AC003974">
    <property type="protein sequence ID" value="AAC04491.1"/>
    <property type="molecule type" value="Genomic_DNA"/>
</dbReference>
<dbReference type="EMBL" id="CP002685">
    <property type="protein sequence ID" value="AEC08729.1"/>
    <property type="molecule type" value="Genomic_DNA"/>
</dbReference>
<dbReference type="EMBL" id="AY128405">
    <property type="protein sequence ID" value="AAM91608.1"/>
    <property type="molecule type" value="mRNA"/>
</dbReference>
<dbReference type="EMBL" id="BT000085">
    <property type="protein sequence ID" value="AAN15404.1"/>
    <property type="molecule type" value="mRNA"/>
</dbReference>
<dbReference type="EMBL" id="AK227415">
    <property type="protein sequence ID" value="BAE99419.1"/>
    <property type="molecule type" value="mRNA"/>
</dbReference>
<dbReference type="PIR" id="T00796">
    <property type="entry name" value="T00796"/>
</dbReference>
<dbReference type="RefSeq" id="NP_180831.1">
    <property type="nucleotide sequence ID" value="NM_128831.4"/>
</dbReference>
<dbReference type="SMR" id="O48845"/>
<dbReference type="BioGRID" id="3179">
    <property type="interactions" value="10"/>
</dbReference>
<dbReference type="FunCoup" id="O48845">
    <property type="interactions" value="3302"/>
</dbReference>
<dbReference type="IntAct" id="O48845">
    <property type="interactions" value="3"/>
</dbReference>
<dbReference type="STRING" id="3702.O48845"/>
<dbReference type="PaxDb" id="3702-AT2G32720.1"/>
<dbReference type="ProteomicsDB" id="222737"/>
<dbReference type="EnsemblPlants" id="AT2G32720.1">
    <property type="protein sequence ID" value="AT2G32720.1"/>
    <property type="gene ID" value="AT2G32720"/>
</dbReference>
<dbReference type="GeneID" id="817832"/>
<dbReference type="Gramene" id="AT2G32720.1">
    <property type="protein sequence ID" value="AT2G32720.1"/>
    <property type="gene ID" value="AT2G32720"/>
</dbReference>
<dbReference type="KEGG" id="ath:AT2G32720"/>
<dbReference type="Araport" id="AT2G32720"/>
<dbReference type="TAIR" id="AT2G32720">
    <property type="gene designation" value="CB5-B"/>
</dbReference>
<dbReference type="eggNOG" id="KOG0537">
    <property type="taxonomic scope" value="Eukaryota"/>
</dbReference>
<dbReference type="HOGENOM" id="CLU_102602_3_0_1"/>
<dbReference type="InParanoid" id="O48845"/>
<dbReference type="OMA" id="HNTRNDL"/>
<dbReference type="OrthoDB" id="260519at2759"/>
<dbReference type="PhylomeDB" id="O48845"/>
<dbReference type="PRO" id="PR:O48845"/>
<dbReference type="Proteomes" id="UP000006548">
    <property type="component" value="Chromosome 2"/>
</dbReference>
<dbReference type="ExpressionAtlas" id="O48845">
    <property type="expression patterns" value="baseline and differential"/>
</dbReference>
<dbReference type="GO" id="GO:0005783">
    <property type="term" value="C:endoplasmic reticulum"/>
    <property type="evidence" value="ECO:0007005"/>
    <property type="project" value="TAIR"/>
</dbReference>
<dbReference type="GO" id="GO:0005789">
    <property type="term" value="C:endoplasmic reticulum membrane"/>
    <property type="evidence" value="ECO:0007669"/>
    <property type="project" value="UniProtKB-SubCell"/>
</dbReference>
<dbReference type="GO" id="GO:0020037">
    <property type="term" value="F:heme binding"/>
    <property type="evidence" value="ECO:0007669"/>
    <property type="project" value="InterPro"/>
</dbReference>
<dbReference type="GO" id="GO:0046872">
    <property type="term" value="F:metal ion binding"/>
    <property type="evidence" value="ECO:0007669"/>
    <property type="project" value="UniProtKB-KW"/>
</dbReference>
<dbReference type="GO" id="GO:0043447">
    <property type="term" value="P:alkane biosynthetic process"/>
    <property type="evidence" value="ECO:0000314"/>
    <property type="project" value="TAIR"/>
</dbReference>
<dbReference type="GO" id="GO:0042761">
    <property type="term" value="P:very long-chain fatty acid biosynthetic process"/>
    <property type="evidence" value="ECO:0000353"/>
    <property type="project" value="TAIR"/>
</dbReference>
<dbReference type="FunFam" id="3.10.120.10:FF:000002">
    <property type="entry name" value="Cytochrome b5 type B"/>
    <property type="match status" value="1"/>
</dbReference>
<dbReference type="Gene3D" id="3.10.120.10">
    <property type="entry name" value="Cytochrome b5-like heme/steroid binding domain"/>
    <property type="match status" value="1"/>
</dbReference>
<dbReference type="InterPro" id="IPR001199">
    <property type="entry name" value="Cyt_B5-like_heme/steroid-bd"/>
</dbReference>
<dbReference type="InterPro" id="IPR036400">
    <property type="entry name" value="Cyt_B5-like_heme/steroid_sf"/>
</dbReference>
<dbReference type="InterPro" id="IPR018506">
    <property type="entry name" value="Cyt_B5_heme-BS"/>
</dbReference>
<dbReference type="InterPro" id="IPR050668">
    <property type="entry name" value="Cytochrome_b5"/>
</dbReference>
<dbReference type="PANTHER" id="PTHR19359">
    <property type="entry name" value="CYTOCHROME B5"/>
    <property type="match status" value="1"/>
</dbReference>
<dbReference type="PANTHER" id="PTHR19359:SF129">
    <property type="entry name" value="CYTOCHROME B5 ISOFORM B"/>
    <property type="match status" value="1"/>
</dbReference>
<dbReference type="Pfam" id="PF00173">
    <property type="entry name" value="Cyt-b5"/>
    <property type="match status" value="1"/>
</dbReference>
<dbReference type="PRINTS" id="PR00363">
    <property type="entry name" value="CYTOCHROMEB5"/>
</dbReference>
<dbReference type="SMART" id="SM01117">
    <property type="entry name" value="Cyt-b5"/>
    <property type="match status" value="1"/>
</dbReference>
<dbReference type="SUPFAM" id="SSF55856">
    <property type="entry name" value="Cytochrome b5-like heme/steroid binding domain"/>
    <property type="match status" value="1"/>
</dbReference>
<dbReference type="PROSITE" id="PS00191">
    <property type="entry name" value="CYTOCHROME_B5_1"/>
    <property type="match status" value="1"/>
</dbReference>
<dbReference type="PROSITE" id="PS50255">
    <property type="entry name" value="CYTOCHROME_B5_2"/>
    <property type="match status" value="1"/>
</dbReference>
<keyword id="KW-0249">Electron transport</keyword>
<keyword id="KW-0256">Endoplasmic reticulum</keyword>
<keyword id="KW-0349">Heme</keyword>
<keyword id="KW-0408">Iron</keyword>
<keyword id="KW-0472">Membrane</keyword>
<keyword id="KW-0479">Metal-binding</keyword>
<keyword id="KW-1185">Reference proteome</keyword>
<keyword id="KW-0812">Transmembrane</keyword>
<keyword id="KW-1133">Transmembrane helix</keyword>
<keyword id="KW-0813">Transport</keyword>
<sequence length="134" mass="15016">MGDEAKIFTLSEVSEHNQAHDCWIVINGKVYNVTKFLEDHPGGDDVLLSSTGKDATDDFEDVGHSESAREMMEQYYVGEIDPTTIPKKVKYTPPKQPHYNQDKTSEFIIKLLQFLVPLAILGLAVGIRIYTKSG</sequence>
<comment type="function">
    <text evidence="4">Membrane bound hemoprotein which function as an electron carrier for several membrane bound oxygenases, including fatty acid desaturases.</text>
</comment>
<comment type="subunit">
    <text evidence="3 5">Interacts with CER1, FAH1, FAH2 and BI-1.</text>
</comment>
<comment type="interaction">
    <interactant intactId="EBI-2295402">
        <id>O48845</id>
    </interactant>
    <interactant intactId="EBI-1644586">
        <id>Q9LD45</id>
        <label>BI-1</label>
    </interactant>
    <organismsDiffer>false</organismsDiffer>
    <experiments>5</experiments>
</comment>
<comment type="subcellular location">
    <subcellularLocation>
        <location evidence="3 5">Endoplasmic reticulum membrane</location>
        <topology evidence="3 5">Single-pass membrane protein</topology>
        <orientation evidence="3 5">Cytoplasmic side</orientation>
    </subcellularLocation>
</comment>
<comment type="similarity">
    <text evidence="8">Belongs to the cytochrome b5 family.</text>
</comment>
<name>CYB5B_ARATH</name>